<gene>
    <name type="primary">THAP10</name>
</gene>
<reference key="1">
    <citation type="submission" date="2004-11" db="EMBL/GenBank/DDBJ databases">
        <authorList>
            <consortium name="The German cDNA consortium"/>
        </authorList>
    </citation>
    <scope>NUCLEOTIDE SEQUENCE [LARGE SCALE MRNA]</scope>
    <source>
        <tissue>Brain cortex</tissue>
    </source>
</reference>
<feature type="chain" id="PRO_0000068652" description="THAP domain-containing protein 10">
    <location>
        <begin position="1"/>
        <end position="264"/>
    </location>
</feature>
<feature type="zinc finger region" description="THAP-type" evidence="1">
    <location>
        <begin position="1"/>
        <end position="90"/>
    </location>
</feature>
<feature type="region of interest" description="Disordered" evidence="2">
    <location>
        <begin position="90"/>
        <end position="136"/>
    </location>
</feature>
<feature type="region of interest" description="Disordered" evidence="2">
    <location>
        <begin position="160"/>
        <end position="195"/>
    </location>
</feature>
<feature type="compositionally biased region" description="Basic and acidic residues" evidence="2">
    <location>
        <begin position="99"/>
        <end position="122"/>
    </location>
</feature>
<feature type="compositionally biased region" description="Polar residues" evidence="2">
    <location>
        <begin position="160"/>
        <end position="175"/>
    </location>
</feature>
<proteinExistence type="evidence at transcript level"/>
<evidence type="ECO:0000255" key="1">
    <source>
        <dbReference type="PROSITE-ProRule" id="PRU00309"/>
    </source>
</evidence>
<evidence type="ECO:0000256" key="2">
    <source>
        <dbReference type="SAM" id="MobiDB-lite"/>
    </source>
</evidence>
<sequence>MPARCVAAHCGNTTKSGKSLFRFPKDRAVRLLWDRFVRGCRADWYGGNDRSVICSDHFAPACFDVSSVIQKNLRFSQRLRLVAGAVPTLHRVPAPAPKGGEEGDQAGRPDTRGELQAARHSEAAPGPVSCTRPRAGKQAAASQYSVGTEEITCENEVVQTQPHADNPSNTVTSVPTHCEEGPVHKSTQISLKRPRHRSVGIQAKVKAFGKRLCNATTQTEELWSRTSSLFDIYSSDSEIDTDWDIKSEQSDLSYIAVQVKEETC</sequence>
<protein>
    <recommendedName>
        <fullName>THAP domain-containing protein 10</fullName>
    </recommendedName>
</protein>
<organism>
    <name type="scientific">Pongo abelii</name>
    <name type="common">Sumatran orangutan</name>
    <name type="synonym">Pongo pygmaeus abelii</name>
    <dbReference type="NCBI Taxonomy" id="9601"/>
    <lineage>
        <taxon>Eukaryota</taxon>
        <taxon>Metazoa</taxon>
        <taxon>Chordata</taxon>
        <taxon>Craniata</taxon>
        <taxon>Vertebrata</taxon>
        <taxon>Euteleostomi</taxon>
        <taxon>Mammalia</taxon>
        <taxon>Eutheria</taxon>
        <taxon>Euarchontoglires</taxon>
        <taxon>Primates</taxon>
        <taxon>Haplorrhini</taxon>
        <taxon>Catarrhini</taxon>
        <taxon>Hominidae</taxon>
        <taxon>Pongo</taxon>
    </lineage>
</organism>
<keyword id="KW-0238">DNA-binding</keyword>
<keyword id="KW-0479">Metal-binding</keyword>
<keyword id="KW-1185">Reference proteome</keyword>
<keyword id="KW-0862">Zinc</keyword>
<keyword id="KW-0863">Zinc-finger</keyword>
<name>THA10_PONAB</name>
<dbReference type="EMBL" id="CR925998">
    <property type="protein sequence ID" value="CAI29640.1"/>
    <property type="molecule type" value="mRNA"/>
</dbReference>
<dbReference type="RefSeq" id="NP_001127683.1">
    <property type="nucleotide sequence ID" value="NM_001134211.1"/>
</dbReference>
<dbReference type="SMR" id="Q5NVM3"/>
<dbReference type="FunCoup" id="Q5NVM3">
    <property type="interactions" value="359"/>
</dbReference>
<dbReference type="STRING" id="9601.ENSPPYP00000007489"/>
<dbReference type="GeneID" id="100174765"/>
<dbReference type="KEGG" id="pon:100174765"/>
<dbReference type="CTD" id="56906"/>
<dbReference type="eggNOG" id="ENOG502SDT3">
    <property type="taxonomic scope" value="Eukaryota"/>
</dbReference>
<dbReference type="InParanoid" id="Q5NVM3"/>
<dbReference type="OrthoDB" id="9446301at2759"/>
<dbReference type="Proteomes" id="UP000001595">
    <property type="component" value="Unplaced"/>
</dbReference>
<dbReference type="GO" id="GO:0043565">
    <property type="term" value="F:sequence-specific DNA binding"/>
    <property type="evidence" value="ECO:0007669"/>
    <property type="project" value="InterPro"/>
</dbReference>
<dbReference type="GO" id="GO:0008270">
    <property type="term" value="F:zinc ion binding"/>
    <property type="evidence" value="ECO:0007669"/>
    <property type="project" value="UniProtKB-KW"/>
</dbReference>
<dbReference type="Gene3D" id="6.20.210.20">
    <property type="entry name" value="THAP domain"/>
    <property type="match status" value="1"/>
</dbReference>
<dbReference type="InterPro" id="IPR026516">
    <property type="entry name" value="THAP1/10"/>
</dbReference>
<dbReference type="InterPro" id="IPR006612">
    <property type="entry name" value="THAP_Znf"/>
</dbReference>
<dbReference type="InterPro" id="IPR038441">
    <property type="entry name" value="THAP_Znf_sf"/>
</dbReference>
<dbReference type="PANTHER" id="PTHR46600">
    <property type="entry name" value="THAP DOMAIN-CONTAINING"/>
    <property type="match status" value="1"/>
</dbReference>
<dbReference type="PANTHER" id="PTHR46600:SF11">
    <property type="entry name" value="THAP DOMAIN-CONTAINING PROTEIN 10"/>
    <property type="match status" value="1"/>
</dbReference>
<dbReference type="Pfam" id="PF05485">
    <property type="entry name" value="THAP"/>
    <property type="match status" value="1"/>
</dbReference>
<dbReference type="SMART" id="SM00692">
    <property type="entry name" value="DM3"/>
    <property type="match status" value="1"/>
</dbReference>
<dbReference type="SMART" id="SM00980">
    <property type="entry name" value="THAP"/>
    <property type="match status" value="1"/>
</dbReference>
<dbReference type="SUPFAM" id="SSF57716">
    <property type="entry name" value="Glucocorticoid receptor-like (DNA-binding domain)"/>
    <property type="match status" value="1"/>
</dbReference>
<dbReference type="PROSITE" id="PS50950">
    <property type="entry name" value="ZF_THAP"/>
    <property type="match status" value="1"/>
</dbReference>
<accession>Q5NVM3</accession>